<evidence type="ECO:0000255" key="1">
    <source>
        <dbReference type="HAMAP-Rule" id="MF_00109"/>
    </source>
</evidence>
<accession>A0QI60</accession>
<feature type="chain" id="PRO_1000022980" description="Shikimate kinase">
    <location>
        <begin position="1"/>
        <end position="176"/>
    </location>
</feature>
<feature type="binding site" evidence="1">
    <location>
        <begin position="12"/>
        <end position="17"/>
    </location>
    <ligand>
        <name>ATP</name>
        <dbReference type="ChEBI" id="CHEBI:30616"/>
    </ligand>
</feature>
<feature type="binding site" evidence="1">
    <location>
        <position position="16"/>
    </location>
    <ligand>
        <name>Mg(2+)</name>
        <dbReference type="ChEBI" id="CHEBI:18420"/>
    </ligand>
</feature>
<feature type="binding site" evidence="1">
    <location>
        <position position="34"/>
    </location>
    <ligand>
        <name>substrate</name>
    </ligand>
</feature>
<feature type="binding site" evidence="1">
    <location>
        <position position="58"/>
    </location>
    <ligand>
        <name>substrate</name>
    </ligand>
</feature>
<feature type="binding site" evidence="1">
    <location>
        <position position="80"/>
    </location>
    <ligand>
        <name>substrate</name>
    </ligand>
</feature>
<feature type="binding site" evidence="1">
    <location>
        <position position="117"/>
    </location>
    <ligand>
        <name>ATP</name>
        <dbReference type="ChEBI" id="CHEBI:30616"/>
    </ligand>
</feature>
<feature type="binding site" evidence="1">
    <location>
        <position position="136"/>
    </location>
    <ligand>
        <name>substrate</name>
    </ligand>
</feature>
<feature type="binding site" evidence="1">
    <location>
        <position position="153"/>
    </location>
    <ligand>
        <name>ATP</name>
        <dbReference type="ChEBI" id="CHEBI:30616"/>
    </ligand>
</feature>
<organism>
    <name type="scientific">Mycobacterium avium (strain 104)</name>
    <dbReference type="NCBI Taxonomy" id="243243"/>
    <lineage>
        <taxon>Bacteria</taxon>
        <taxon>Bacillati</taxon>
        <taxon>Actinomycetota</taxon>
        <taxon>Actinomycetes</taxon>
        <taxon>Mycobacteriales</taxon>
        <taxon>Mycobacteriaceae</taxon>
        <taxon>Mycobacterium</taxon>
        <taxon>Mycobacterium avium complex (MAC)</taxon>
    </lineage>
</organism>
<keyword id="KW-0028">Amino-acid biosynthesis</keyword>
<keyword id="KW-0057">Aromatic amino acid biosynthesis</keyword>
<keyword id="KW-0067">ATP-binding</keyword>
<keyword id="KW-0963">Cytoplasm</keyword>
<keyword id="KW-0418">Kinase</keyword>
<keyword id="KW-0460">Magnesium</keyword>
<keyword id="KW-0479">Metal-binding</keyword>
<keyword id="KW-0547">Nucleotide-binding</keyword>
<keyword id="KW-0808">Transferase</keyword>
<comment type="function">
    <text evidence="1">Catalyzes the specific phosphorylation of the 3-hydroxyl group of shikimic acid using ATP as a cosubstrate.</text>
</comment>
<comment type="catalytic activity">
    <reaction evidence="1">
        <text>shikimate + ATP = 3-phosphoshikimate + ADP + H(+)</text>
        <dbReference type="Rhea" id="RHEA:13121"/>
        <dbReference type="ChEBI" id="CHEBI:15378"/>
        <dbReference type="ChEBI" id="CHEBI:30616"/>
        <dbReference type="ChEBI" id="CHEBI:36208"/>
        <dbReference type="ChEBI" id="CHEBI:145989"/>
        <dbReference type="ChEBI" id="CHEBI:456216"/>
        <dbReference type="EC" id="2.7.1.71"/>
    </reaction>
</comment>
<comment type="cofactor">
    <cofactor evidence="1">
        <name>Mg(2+)</name>
        <dbReference type="ChEBI" id="CHEBI:18420"/>
    </cofactor>
    <text evidence="1">Binds 1 Mg(2+) ion per subunit.</text>
</comment>
<comment type="pathway">
    <text evidence="1">Metabolic intermediate biosynthesis; chorismate biosynthesis; chorismate from D-erythrose 4-phosphate and phosphoenolpyruvate: step 5/7.</text>
</comment>
<comment type="subunit">
    <text evidence="1">Monomer.</text>
</comment>
<comment type="subcellular location">
    <subcellularLocation>
        <location evidence="1">Cytoplasm</location>
    </subcellularLocation>
</comment>
<comment type="similarity">
    <text evidence="1">Belongs to the shikimate kinase family.</text>
</comment>
<dbReference type="EC" id="2.7.1.71" evidence="1"/>
<dbReference type="EMBL" id="CP000479">
    <property type="protein sequence ID" value="ABK64660.1"/>
    <property type="molecule type" value="Genomic_DNA"/>
</dbReference>
<dbReference type="RefSeq" id="WP_003872632.1">
    <property type="nucleotide sequence ID" value="NC_008595.1"/>
</dbReference>
<dbReference type="SMR" id="A0QI60"/>
<dbReference type="KEGG" id="mav:MAV_3416"/>
<dbReference type="HOGENOM" id="CLU_057607_3_3_11"/>
<dbReference type="UniPathway" id="UPA00053">
    <property type="reaction ID" value="UER00088"/>
</dbReference>
<dbReference type="Proteomes" id="UP000001574">
    <property type="component" value="Chromosome"/>
</dbReference>
<dbReference type="GO" id="GO:0005829">
    <property type="term" value="C:cytosol"/>
    <property type="evidence" value="ECO:0007669"/>
    <property type="project" value="TreeGrafter"/>
</dbReference>
<dbReference type="GO" id="GO:0005524">
    <property type="term" value="F:ATP binding"/>
    <property type="evidence" value="ECO:0007669"/>
    <property type="project" value="UniProtKB-UniRule"/>
</dbReference>
<dbReference type="GO" id="GO:0000287">
    <property type="term" value="F:magnesium ion binding"/>
    <property type="evidence" value="ECO:0007669"/>
    <property type="project" value="UniProtKB-UniRule"/>
</dbReference>
<dbReference type="GO" id="GO:0004765">
    <property type="term" value="F:shikimate kinase activity"/>
    <property type="evidence" value="ECO:0007669"/>
    <property type="project" value="UniProtKB-UniRule"/>
</dbReference>
<dbReference type="GO" id="GO:0008652">
    <property type="term" value="P:amino acid biosynthetic process"/>
    <property type="evidence" value="ECO:0007669"/>
    <property type="project" value="UniProtKB-KW"/>
</dbReference>
<dbReference type="GO" id="GO:0009073">
    <property type="term" value="P:aromatic amino acid family biosynthetic process"/>
    <property type="evidence" value="ECO:0007669"/>
    <property type="project" value="UniProtKB-KW"/>
</dbReference>
<dbReference type="GO" id="GO:0009423">
    <property type="term" value="P:chorismate biosynthetic process"/>
    <property type="evidence" value="ECO:0007669"/>
    <property type="project" value="UniProtKB-UniRule"/>
</dbReference>
<dbReference type="CDD" id="cd00464">
    <property type="entry name" value="SK"/>
    <property type="match status" value="1"/>
</dbReference>
<dbReference type="Gene3D" id="3.40.50.300">
    <property type="entry name" value="P-loop containing nucleotide triphosphate hydrolases"/>
    <property type="match status" value="1"/>
</dbReference>
<dbReference type="HAMAP" id="MF_00109">
    <property type="entry name" value="Shikimate_kinase"/>
    <property type="match status" value="1"/>
</dbReference>
<dbReference type="InterPro" id="IPR027417">
    <property type="entry name" value="P-loop_NTPase"/>
</dbReference>
<dbReference type="InterPro" id="IPR031322">
    <property type="entry name" value="Shikimate/glucono_kinase"/>
</dbReference>
<dbReference type="InterPro" id="IPR000623">
    <property type="entry name" value="Shikimate_kinase/TSH1"/>
</dbReference>
<dbReference type="InterPro" id="IPR023000">
    <property type="entry name" value="Shikimate_kinase_CS"/>
</dbReference>
<dbReference type="PANTHER" id="PTHR21087">
    <property type="entry name" value="SHIKIMATE KINASE"/>
    <property type="match status" value="1"/>
</dbReference>
<dbReference type="PANTHER" id="PTHR21087:SF16">
    <property type="entry name" value="SHIKIMATE KINASE 1, CHLOROPLASTIC"/>
    <property type="match status" value="1"/>
</dbReference>
<dbReference type="Pfam" id="PF01202">
    <property type="entry name" value="SKI"/>
    <property type="match status" value="1"/>
</dbReference>
<dbReference type="PRINTS" id="PR01100">
    <property type="entry name" value="SHIKIMTKNASE"/>
</dbReference>
<dbReference type="SUPFAM" id="SSF52540">
    <property type="entry name" value="P-loop containing nucleoside triphosphate hydrolases"/>
    <property type="match status" value="1"/>
</dbReference>
<dbReference type="PROSITE" id="PS01128">
    <property type="entry name" value="SHIKIMATE_KINASE"/>
    <property type="match status" value="1"/>
</dbReference>
<name>AROK_MYCA1</name>
<proteinExistence type="inferred from homology"/>
<protein>
    <recommendedName>
        <fullName evidence="1">Shikimate kinase</fullName>
        <shortName evidence="1">SK</shortName>
        <ecNumber evidence="1">2.7.1.71</ecNumber>
    </recommendedName>
</protein>
<reference key="1">
    <citation type="submission" date="2006-10" db="EMBL/GenBank/DDBJ databases">
        <authorList>
            <person name="Fleischmann R.D."/>
            <person name="Dodson R.J."/>
            <person name="Haft D.H."/>
            <person name="Merkel J.S."/>
            <person name="Nelson W.C."/>
            <person name="Fraser C.M."/>
        </authorList>
    </citation>
    <scope>NUCLEOTIDE SEQUENCE [LARGE SCALE GENOMIC DNA]</scope>
    <source>
        <strain>104</strain>
    </source>
</reference>
<sequence>MAPKAVLIGLPGSGKSTIGRRLAKALGVGFLDTDAAIEQRTGRPIAEIFATDGEREFRRIEEEVVRAALTEHDGVLSLGGGAVTSPGVREALAGHTVVYLEISATEGVRRTGGNTVRPLLAGPDRAEKYRALLAERSPLYRRAATIRVDTNRRNPGAVVRYIVSRLPATDACRAAT</sequence>
<gene>
    <name evidence="1" type="primary">aroK</name>
    <name type="ordered locus">MAV_3416</name>
</gene>